<feature type="chain" id="PRO_0000414539" description="Release factor glutamine methyltransferase">
    <location>
        <begin position="1"/>
        <end position="325"/>
    </location>
</feature>
<feature type="region of interest" description="Disordered" evidence="2">
    <location>
        <begin position="306"/>
        <end position="325"/>
    </location>
</feature>
<feature type="binding site" evidence="1">
    <location>
        <begin position="141"/>
        <end position="145"/>
    </location>
    <ligand>
        <name>S-adenosyl-L-methionine</name>
        <dbReference type="ChEBI" id="CHEBI:59789"/>
    </ligand>
</feature>
<feature type="binding site" evidence="1">
    <location>
        <position position="164"/>
    </location>
    <ligand>
        <name>S-adenosyl-L-methionine</name>
        <dbReference type="ChEBI" id="CHEBI:59789"/>
    </ligand>
</feature>
<feature type="binding site" evidence="1">
    <location>
        <position position="193"/>
    </location>
    <ligand>
        <name>S-adenosyl-L-methionine</name>
        <dbReference type="ChEBI" id="CHEBI:59789"/>
    </ligand>
</feature>
<feature type="binding site" evidence="1">
    <location>
        <begin position="207"/>
        <end position="210"/>
    </location>
    <ligand>
        <name>substrate</name>
    </ligand>
</feature>
<feature type="binding site" evidence="1">
    <location>
        <position position="207"/>
    </location>
    <ligand>
        <name>S-adenosyl-L-methionine</name>
        <dbReference type="ChEBI" id="CHEBI:59789"/>
    </ligand>
</feature>
<proteinExistence type="inferred from homology"/>
<gene>
    <name evidence="1" type="primary">prmC</name>
    <name type="ordered locus">Rru_A0751</name>
</gene>
<keyword id="KW-0489">Methyltransferase</keyword>
<keyword id="KW-1185">Reference proteome</keyword>
<keyword id="KW-0949">S-adenosyl-L-methionine</keyword>
<keyword id="KW-0808">Transferase</keyword>
<accession>Q2RWE0</accession>
<name>PRMC_RHORT</name>
<reference key="1">
    <citation type="journal article" date="2011" name="Stand. Genomic Sci.">
        <title>Complete genome sequence of Rhodospirillum rubrum type strain (S1).</title>
        <authorList>
            <person name="Munk A.C."/>
            <person name="Copeland A."/>
            <person name="Lucas S."/>
            <person name="Lapidus A."/>
            <person name="Del Rio T.G."/>
            <person name="Barry K."/>
            <person name="Detter J.C."/>
            <person name="Hammon N."/>
            <person name="Israni S."/>
            <person name="Pitluck S."/>
            <person name="Brettin T."/>
            <person name="Bruce D."/>
            <person name="Han C."/>
            <person name="Tapia R."/>
            <person name="Gilna P."/>
            <person name="Schmutz J."/>
            <person name="Larimer F."/>
            <person name="Land M."/>
            <person name="Kyrpides N.C."/>
            <person name="Mavromatis K."/>
            <person name="Richardson P."/>
            <person name="Rohde M."/>
            <person name="Goeker M."/>
            <person name="Klenk H.P."/>
            <person name="Zhang Y."/>
            <person name="Roberts G.P."/>
            <person name="Reslewic S."/>
            <person name="Schwartz D.C."/>
        </authorList>
    </citation>
    <scope>NUCLEOTIDE SEQUENCE [LARGE SCALE GENOMIC DNA]</scope>
    <source>
        <strain>ATCC 11170 / ATH 1.1.1 / DSM 467 / LMG 4362 / NCIMB 8255 / S1</strain>
    </source>
</reference>
<comment type="function">
    <text evidence="1">Methylates the class 1 translation termination release factors RF1/PrfA and RF2/PrfB on the glutamine residue of the universally conserved GGQ motif.</text>
</comment>
<comment type="catalytic activity">
    <reaction evidence="1">
        <text>L-glutaminyl-[peptide chain release factor] + S-adenosyl-L-methionine = N(5)-methyl-L-glutaminyl-[peptide chain release factor] + S-adenosyl-L-homocysteine + H(+)</text>
        <dbReference type="Rhea" id="RHEA:42896"/>
        <dbReference type="Rhea" id="RHEA-COMP:10271"/>
        <dbReference type="Rhea" id="RHEA-COMP:10272"/>
        <dbReference type="ChEBI" id="CHEBI:15378"/>
        <dbReference type="ChEBI" id="CHEBI:30011"/>
        <dbReference type="ChEBI" id="CHEBI:57856"/>
        <dbReference type="ChEBI" id="CHEBI:59789"/>
        <dbReference type="ChEBI" id="CHEBI:61891"/>
        <dbReference type="EC" id="2.1.1.297"/>
    </reaction>
</comment>
<comment type="similarity">
    <text evidence="1">Belongs to the protein N5-glutamine methyltransferase family. PrmC subfamily.</text>
</comment>
<dbReference type="EC" id="2.1.1.297" evidence="1"/>
<dbReference type="EMBL" id="CP000230">
    <property type="protein sequence ID" value="ABC21555.1"/>
    <property type="molecule type" value="Genomic_DNA"/>
</dbReference>
<dbReference type="RefSeq" id="WP_011388509.1">
    <property type="nucleotide sequence ID" value="NC_007643.1"/>
</dbReference>
<dbReference type="RefSeq" id="YP_425842.1">
    <property type="nucleotide sequence ID" value="NC_007643.1"/>
</dbReference>
<dbReference type="SMR" id="Q2RWE0"/>
<dbReference type="STRING" id="269796.Rru_A0751"/>
<dbReference type="EnsemblBacteria" id="ABC21555">
    <property type="protein sequence ID" value="ABC21555"/>
    <property type="gene ID" value="Rru_A0751"/>
</dbReference>
<dbReference type="KEGG" id="rru:Rru_A0751"/>
<dbReference type="PATRIC" id="fig|269796.9.peg.804"/>
<dbReference type="eggNOG" id="COG2890">
    <property type="taxonomic scope" value="Bacteria"/>
</dbReference>
<dbReference type="HOGENOM" id="CLU_018398_3_1_5"/>
<dbReference type="PhylomeDB" id="Q2RWE0"/>
<dbReference type="Proteomes" id="UP000001929">
    <property type="component" value="Chromosome"/>
</dbReference>
<dbReference type="GO" id="GO:0003676">
    <property type="term" value="F:nucleic acid binding"/>
    <property type="evidence" value="ECO:0007669"/>
    <property type="project" value="InterPro"/>
</dbReference>
<dbReference type="GO" id="GO:0102559">
    <property type="term" value="F:protein-(glutamine-N5) methyltransferase activity"/>
    <property type="evidence" value="ECO:0007669"/>
    <property type="project" value="UniProtKB-EC"/>
</dbReference>
<dbReference type="GO" id="GO:0036009">
    <property type="term" value="F:protein-glutamine N-methyltransferase activity"/>
    <property type="evidence" value="ECO:0007669"/>
    <property type="project" value="UniProtKB-UniRule"/>
</dbReference>
<dbReference type="GO" id="GO:0032259">
    <property type="term" value="P:methylation"/>
    <property type="evidence" value="ECO:0007669"/>
    <property type="project" value="UniProtKB-KW"/>
</dbReference>
<dbReference type="CDD" id="cd02440">
    <property type="entry name" value="AdoMet_MTases"/>
    <property type="match status" value="1"/>
</dbReference>
<dbReference type="Gene3D" id="1.10.8.10">
    <property type="entry name" value="DNA helicase RuvA subunit, C-terminal domain"/>
    <property type="match status" value="1"/>
</dbReference>
<dbReference type="Gene3D" id="3.40.50.150">
    <property type="entry name" value="Vaccinia Virus protein VP39"/>
    <property type="match status" value="1"/>
</dbReference>
<dbReference type="HAMAP" id="MF_02126">
    <property type="entry name" value="RF_methyltr_PrmC"/>
    <property type="match status" value="1"/>
</dbReference>
<dbReference type="InterPro" id="IPR002052">
    <property type="entry name" value="DNA_methylase_N6_adenine_CS"/>
</dbReference>
<dbReference type="InterPro" id="IPR004556">
    <property type="entry name" value="HemK-like"/>
</dbReference>
<dbReference type="InterPro" id="IPR050320">
    <property type="entry name" value="N5-glutamine_MTase"/>
</dbReference>
<dbReference type="InterPro" id="IPR040758">
    <property type="entry name" value="PrmC_N"/>
</dbReference>
<dbReference type="InterPro" id="IPR019874">
    <property type="entry name" value="RF_methyltr_PrmC"/>
</dbReference>
<dbReference type="InterPro" id="IPR029063">
    <property type="entry name" value="SAM-dependent_MTases_sf"/>
</dbReference>
<dbReference type="InterPro" id="IPR007848">
    <property type="entry name" value="Small_mtfrase_dom"/>
</dbReference>
<dbReference type="NCBIfam" id="TIGR00536">
    <property type="entry name" value="hemK_fam"/>
    <property type="match status" value="1"/>
</dbReference>
<dbReference type="NCBIfam" id="TIGR03534">
    <property type="entry name" value="RF_mod_PrmC"/>
    <property type="match status" value="1"/>
</dbReference>
<dbReference type="PANTHER" id="PTHR18895">
    <property type="entry name" value="HEMK METHYLTRANSFERASE"/>
    <property type="match status" value="1"/>
</dbReference>
<dbReference type="PANTHER" id="PTHR18895:SF74">
    <property type="entry name" value="MTRF1L RELEASE FACTOR GLUTAMINE METHYLTRANSFERASE"/>
    <property type="match status" value="1"/>
</dbReference>
<dbReference type="Pfam" id="PF05175">
    <property type="entry name" value="MTS"/>
    <property type="match status" value="1"/>
</dbReference>
<dbReference type="Pfam" id="PF17827">
    <property type="entry name" value="PrmC_N"/>
    <property type="match status" value="1"/>
</dbReference>
<dbReference type="SUPFAM" id="SSF53335">
    <property type="entry name" value="S-adenosyl-L-methionine-dependent methyltransferases"/>
    <property type="match status" value="1"/>
</dbReference>
<evidence type="ECO:0000255" key="1">
    <source>
        <dbReference type="HAMAP-Rule" id="MF_02126"/>
    </source>
</evidence>
<evidence type="ECO:0000256" key="2">
    <source>
        <dbReference type="SAM" id="MobiDB-lite"/>
    </source>
</evidence>
<protein>
    <recommendedName>
        <fullName evidence="1">Release factor glutamine methyltransferase</fullName>
        <shortName evidence="1">RF MTase</shortName>
        <ecNumber evidence="1">2.1.1.297</ecNumber>
    </recommendedName>
    <alternativeName>
        <fullName evidence="1">N5-glutamine methyltransferase PrmC</fullName>
    </alternativeName>
    <alternativeName>
        <fullName evidence="1">Protein-(glutamine-N5) MTase PrmC</fullName>
    </alternativeName>
    <alternativeName>
        <fullName evidence="1">Protein-glutamine N-methyltransferase PrmC</fullName>
    </alternativeName>
</protein>
<organism>
    <name type="scientific">Rhodospirillum rubrum (strain ATCC 11170 / ATH 1.1.1 / DSM 467 / LMG 4362 / NCIMB 8255 / S1)</name>
    <dbReference type="NCBI Taxonomy" id="269796"/>
    <lineage>
        <taxon>Bacteria</taxon>
        <taxon>Pseudomonadati</taxon>
        <taxon>Pseudomonadota</taxon>
        <taxon>Alphaproteobacteria</taxon>
        <taxon>Rhodospirillales</taxon>
        <taxon>Rhodospirillaceae</taxon>
        <taxon>Rhodospirillum</taxon>
    </lineage>
</organism>
<sequence>MSDGDGGGEQGGGGPAEAEESALVLGRLLDRGAWRLKVAGVEKPRRDARLLAGHVLGLSPGAVLLADDRVVTPEEAQALEAVIARRETREPVSRILGHRGFWRFDLALGADTLDPRPDTETLVEAGLAVLEGCGGRILDLGTGSGCILLALLADRPGAIGLGIDIAPGAVRVALRNARALGLERRALFAVGDWAAAVAGPFDLIVSNPPYIPSADIAALEPEVARFDPSRALDGGADGLDPYRILAAQVPALLAPAGVLAVEFGQGQARDVAGLLEVGGLCPYEIKKDLSGEERCLLARRRAAGPLPPIHIDAKPSAPGNGPTKA</sequence>